<organism>
    <name type="scientific">Drosophila melanogaster</name>
    <name type="common">Fruit fly</name>
    <dbReference type="NCBI Taxonomy" id="7227"/>
    <lineage>
        <taxon>Eukaryota</taxon>
        <taxon>Metazoa</taxon>
        <taxon>Ecdysozoa</taxon>
        <taxon>Arthropoda</taxon>
        <taxon>Hexapoda</taxon>
        <taxon>Insecta</taxon>
        <taxon>Pterygota</taxon>
        <taxon>Neoptera</taxon>
        <taxon>Endopterygota</taxon>
        <taxon>Diptera</taxon>
        <taxon>Brachycera</taxon>
        <taxon>Muscomorpha</taxon>
        <taxon>Ephydroidea</taxon>
        <taxon>Drosophilidae</taxon>
        <taxon>Drosophila</taxon>
        <taxon>Sophophora</taxon>
    </lineage>
</organism>
<keyword id="KW-0963">Cytoplasm</keyword>
<keyword id="KW-0256">Endoplasmic reticulum</keyword>
<keyword id="KW-0472">Membrane</keyword>
<keyword id="KW-0539">Nucleus</keyword>
<keyword id="KW-1185">Reference proteome</keyword>
<keyword id="KW-0812">Transmembrane</keyword>
<keyword id="KW-1133">Transmembrane helix</keyword>
<accession>Q9VVA8</accession>
<gene>
    <name evidence="4 7" type="primary">kud</name>
    <name type="ORF">CG9669</name>
</gene>
<dbReference type="EMBL" id="AE014296">
    <property type="protein sequence ID" value="AAF49405.1"/>
    <property type="molecule type" value="Genomic_DNA"/>
</dbReference>
<dbReference type="RefSeq" id="NP_001246807.1">
    <property type="nucleotide sequence ID" value="NM_001259878.1"/>
</dbReference>
<dbReference type="RefSeq" id="NP_648925.1">
    <property type="nucleotide sequence ID" value="NM_140668.3"/>
</dbReference>
<dbReference type="SMR" id="Q9VVA8"/>
<dbReference type="BioGRID" id="65181">
    <property type="interactions" value="3"/>
</dbReference>
<dbReference type="ComplexPortal" id="CPX-8761">
    <property type="entry name" value="Oligosaccharyltransferase A complex"/>
</dbReference>
<dbReference type="ComplexPortal" id="CPX-8803">
    <property type="entry name" value="Oligosaccharyltransferase B complex"/>
</dbReference>
<dbReference type="DIP" id="DIP-22543N"/>
<dbReference type="FunCoup" id="Q9VVA8">
    <property type="interactions" value="549"/>
</dbReference>
<dbReference type="IntAct" id="Q9VVA8">
    <property type="interactions" value="3"/>
</dbReference>
<dbReference type="STRING" id="7227.FBpp0075098"/>
<dbReference type="PaxDb" id="7227-FBpp0075098"/>
<dbReference type="EnsemblMetazoa" id="FBtr0075339">
    <property type="protein sequence ID" value="FBpp0075098"/>
    <property type="gene ID" value="FBgn0036667"/>
</dbReference>
<dbReference type="EnsemblMetazoa" id="FBtr0305272">
    <property type="protein sequence ID" value="FBpp0293796"/>
    <property type="gene ID" value="FBgn0036667"/>
</dbReference>
<dbReference type="GeneID" id="39882"/>
<dbReference type="KEGG" id="dme:Dmel_CG9669"/>
<dbReference type="UCSC" id="CG9669-RA">
    <property type="organism name" value="d. melanogaster"/>
</dbReference>
<dbReference type="AGR" id="FB:FBgn0036667"/>
<dbReference type="CTD" id="39882"/>
<dbReference type="FlyBase" id="FBgn0036667">
    <property type="gene designation" value="kud"/>
</dbReference>
<dbReference type="VEuPathDB" id="VectorBase:FBgn0036667"/>
<dbReference type="eggNOG" id="KOG4452">
    <property type="taxonomic scope" value="Eukaryota"/>
</dbReference>
<dbReference type="GeneTree" id="ENSGT00390000010089"/>
<dbReference type="HOGENOM" id="CLU_180449_0_0_1"/>
<dbReference type="InParanoid" id="Q9VVA8"/>
<dbReference type="OMA" id="MERYVGP"/>
<dbReference type="OrthoDB" id="18408at2759"/>
<dbReference type="PhylomeDB" id="Q9VVA8"/>
<dbReference type="BioGRID-ORCS" id="39882">
    <property type="hits" value="1 hit in 1 CRISPR screen"/>
</dbReference>
<dbReference type="GenomeRNAi" id="39882"/>
<dbReference type="PRO" id="PR:Q9VVA8"/>
<dbReference type="Proteomes" id="UP000000803">
    <property type="component" value="Chromosome 3L"/>
</dbReference>
<dbReference type="Bgee" id="FBgn0036667">
    <property type="expression patterns" value="Expressed in adult class III enteroendocrine cell in adult midgut (Drosophila) and 143 other cell types or tissues"/>
</dbReference>
<dbReference type="ExpressionAtlas" id="Q9VVA8">
    <property type="expression patterns" value="baseline and differential"/>
</dbReference>
<dbReference type="GO" id="GO:0005737">
    <property type="term" value="C:cytoplasm"/>
    <property type="evidence" value="ECO:0000314"/>
    <property type="project" value="UniProtKB"/>
</dbReference>
<dbReference type="GO" id="GO:0005789">
    <property type="term" value="C:endoplasmic reticulum membrane"/>
    <property type="evidence" value="ECO:0000314"/>
    <property type="project" value="UniProtKB"/>
</dbReference>
<dbReference type="GO" id="GO:0005640">
    <property type="term" value="C:nuclear outer membrane"/>
    <property type="evidence" value="ECO:0000314"/>
    <property type="project" value="UniProtKB"/>
</dbReference>
<dbReference type="GO" id="GO:0008250">
    <property type="term" value="C:oligosaccharyltransferase complex"/>
    <property type="evidence" value="ECO:0007669"/>
    <property type="project" value="InterPro"/>
</dbReference>
<dbReference type="GO" id="GO:0062062">
    <property type="term" value="F:oligosaccharyltransferase complex binding"/>
    <property type="evidence" value="ECO:0000318"/>
    <property type="project" value="GO_Central"/>
</dbReference>
<dbReference type="GO" id="GO:0006998">
    <property type="term" value="P:nuclear envelope organization"/>
    <property type="evidence" value="ECO:0000315"/>
    <property type="project" value="UniProtKB"/>
</dbReference>
<dbReference type="GO" id="GO:0007097">
    <property type="term" value="P:nuclear migration"/>
    <property type="evidence" value="ECO:0000315"/>
    <property type="project" value="UniProtKB"/>
</dbReference>
<dbReference type="GO" id="GO:0034976">
    <property type="term" value="P:response to endoplasmic reticulum stress"/>
    <property type="evidence" value="ECO:0000318"/>
    <property type="project" value="GO_Central"/>
</dbReference>
<dbReference type="InterPro" id="IPR007915">
    <property type="entry name" value="TMEM258/Ost5"/>
</dbReference>
<dbReference type="PANTHER" id="PTHR13636">
    <property type="entry name" value="TRANSMEMBRANE PROTEIN 258"/>
    <property type="match status" value="1"/>
</dbReference>
<dbReference type="Pfam" id="PF05251">
    <property type="entry name" value="Ost5"/>
    <property type="match status" value="1"/>
</dbReference>
<comment type="function">
    <text evidence="1 3">Subunit of the oligosaccharyl transferase (OST) complex that catalyzes the initial transfer of a defined glycan (Glc(3)Man(9)GlcNAc(2) in eukaryotes) from the lipid carrier dolichol-pyrophosphate to an asparagine residue within an Asn-X-Ser/Thr consensus motif in nascent polypeptide chains, the first step in protein N-glycosylation. N-glycosylation occurs cotranslationally and the complex associates with the Sec61 complex at the channel-forming translocon complex that mediates protein translocation across the endoplasmic reticulum (ER). All subunits are required for a maximal enzyme activity (By similarity). In addition may regulates nuclear envelope (NE) architecture and nuclear positioning through the linker of nucleoskeleton and cytoskeleton (LINC)-dependent and -independent mechanisms (PubMed:28716842).</text>
</comment>
<comment type="subunit">
    <text evidence="1 3">Homodimer (PubMed:28716842). Component of the oligosaccharyltransferase (OST) complex (By similarity). Interacts with klar and Msp300, components of LINC complex (PubMed:28716842).</text>
</comment>
<comment type="interaction">
    <interactant intactId="EBI-190558">
        <id>Q9VVA8</id>
    </interactant>
    <interactant intactId="EBI-458693">
        <id>Q9Y0E4</id>
        <label>klar</label>
    </interactant>
    <organismsDiffer>false</organismsDiffer>
    <experiments>3</experiments>
</comment>
<comment type="subcellular location">
    <subcellularLocation>
        <location evidence="3">Nucleus outer membrane</location>
        <topology evidence="5">Multi-pass membrane protein</topology>
    </subcellularLocation>
    <subcellularLocation>
        <location evidence="3">Cytoplasm</location>
    </subcellularLocation>
    <subcellularLocation>
        <location evidence="3">Endoplasmic reticulum membrane</location>
    </subcellularLocation>
</comment>
<comment type="disruption phenotype">
    <text evidence="3">Homozygous mutants display growth retardation and dy as larvae and show defects in ovarian follicle cells, which enwrap the germ cell clusters in ovarioles.</text>
</comment>
<comment type="similarity">
    <text evidence="5">Belongs to the OST5 family.</text>
</comment>
<proteinExistence type="evidence at protein level"/>
<protein>
    <recommendedName>
        <fullName evidence="5">Transmembrane protein 258</fullName>
    </recommendedName>
    <alternativeName>
        <fullName>Dolichyl-diphosphooligosaccharide--protein glycosyltransferase subunit TMEM258</fullName>
        <shortName>Oligosaccharyl transferase subunit TMEM258</shortName>
    </alternativeName>
    <alternativeName>
        <fullName evidence="6">Protein kuduk</fullName>
    </alternativeName>
    <alternativeName>
        <fullName>Transmembrane protein 258 homolog</fullName>
    </alternativeName>
</protein>
<name>TM258_DROME</name>
<feature type="chain" id="PRO_0000221145" description="Transmembrane protein 258">
    <location>
        <begin position="1"/>
        <end position="78"/>
    </location>
</feature>
<feature type="topological domain" description="Cytoplasmic" evidence="6">
    <location>
        <begin position="1"/>
        <end position="18"/>
    </location>
</feature>
<feature type="transmembrane region" description="Helical" evidence="2">
    <location>
        <begin position="19"/>
        <end position="39"/>
    </location>
</feature>
<feature type="topological domain" description="Cytoplasmic" evidence="6">
    <location>
        <begin position="40"/>
        <end position="53"/>
    </location>
</feature>
<feature type="transmembrane region" description="Helical" evidence="2">
    <location>
        <begin position="54"/>
        <end position="74"/>
    </location>
</feature>
<feature type="topological domain" description="Perinuclear space" evidence="6">
    <location>
        <begin position="75"/>
        <end position="78"/>
    </location>
</feature>
<sequence length="78" mass="8717">MDVMQRYVSPVNPAVFPHLATVLLVIGTFFTAWFFIFVVSRKSSKESTLIKELLISLCASIFLGFGIVFLLLTVGIYV</sequence>
<evidence type="ECO:0000250" key="1">
    <source>
        <dbReference type="UniProtKB" id="P61165"/>
    </source>
</evidence>
<evidence type="ECO:0000255" key="2"/>
<evidence type="ECO:0000269" key="3">
    <source>
    </source>
</evidence>
<evidence type="ECO:0000303" key="4">
    <source>
    </source>
</evidence>
<evidence type="ECO:0000305" key="5"/>
<evidence type="ECO:0000305" key="6">
    <source>
    </source>
</evidence>
<evidence type="ECO:0000312" key="7">
    <source>
        <dbReference type="FlyBase" id="FBgn0036667"/>
    </source>
</evidence>
<reference key="1">
    <citation type="journal article" date="2000" name="Science">
        <title>The genome sequence of Drosophila melanogaster.</title>
        <authorList>
            <person name="Adams M.D."/>
            <person name="Celniker S.E."/>
            <person name="Holt R.A."/>
            <person name="Evans C.A."/>
            <person name="Gocayne J.D."/>
            <person name="Amanatides P.G."/>
            <person name="Scherer S.E."/>
            <person name="Li P.W."/>
            <person name="Hoskins R.A."/>
            <person name="Galle R.F."/>
            <person name="George R.A."/>
            <person name="Lewis S.E."/>
            <person name="Richards S."/>
            <person name="Ashburner M."/>
            <person name="Henderson S.N."/>
            <person name="Sutton G.G."/>
            <person name="Wortman J.R."/>
            <person name="Yandell M.D."/>
            <person name="Zhang Q."/>
            <person name="Chen L.X."/>
            <person name="Brandon R.C."/>
            <person name="Rogers Y.-H.C."/>
            <person name="Blazej R.G."/>
            <person name="Champe M."/>
            <person name="Pfeiffer B.D."/>
            <person name="Wan K.H."/>
            <person name="Doyle C."/>
            <person name="Baxter E.G."/>
            <person name="Helt G."/>
            <person name="Nelson C.R."/>
            <person name="Miklos G.L.G."/>
            <person name="Abril J.F."/>
            <person name="Agbayani A."/>
            <person name="An H.-J."/>
            <person name="Andrews-Pfannkoch C."/>
            <person name="Baldwin D."/>
            <person name="Ballew R.M."/>
            <person name="Basu A."/>
            <person name="Baxendale J."/>
            <person name="Bayraktaroglu L."/>
            <person name="Beasley E.M."/>
            <person name="Beeson K.Y."/>
            <person name="Benos P.V."/>
            <person name="Berman B.P."/>
            <person name="Bhandari D."/>
            <person name="Bolshakov S."/>
            <person name="Borkova D."/>
            <person name="Botchan M.R."/>
            <person name="Bouck J."/>
            <person name="Brokstein P."/>
            <person name="Brottier P."/>
            <person name="Burtis K.C."/>
            <person name="Busam D.A."/>
            <person name="Butler H."/>
            <person name="Cadieu E."/>
            <person name="Center A."/>
            <person name="Chandra I."/>
            <person name="Cherry J.M."/>
            <person name="Cawley S."/>
            <person name="Dahlke C."/>
            <person name="Davenport L.B."/>
            <person name="Davies P."/>
            <person name="de Pablos B."/>
            <person name="Delcher A."/>
            <person name="Deng Z."/>
            <person name="Mays A.D."/>
            <person name="Dew I."/>
            <person name="Dietz S.M."/>
            <person name="Dodson K."/>
            <person name="Doup L.E."/>
            <person name="Downes M."/>
            <person name="Dugan-Rocha S."/>
            <person name="Dunkov B.C."/>
            <person name="Dunn P."/>
            <person name="Durbin K.J."/>
            <person name="Evangelista C.C."/>
            <person name="Ferraz C."/>
            <person name="Ferriera S."/>
            <person name="Fleischmann W."/>
            <person name="Fosler C."/>
            <person name="Gabrielian A.E."/>
            <person name="Garg N.S."/>
            <person name="Gelbart W.M."/>
            <person name="Glasser K."/>
            <person name="Glodek A."/>
            <person name="Gong F."/>
            <person name="Gorrell J.H."/>
            <person name="Gu Z."/>
            <person name="Guan P."/>
            <person name="Harris M."/>
            <person name="Harris N.L."/>
            <person name="Harvey D.A."/>
            <person name="Heiman T.J."/>
            <person name="Hernandez J.R."/>
            <person name="Houck J."/>
            <person name="Hostin D."/>
            <person name="Houston K.A."/>
            <person name="Howland T.J."/>
            <person name="Wei M.-H."/>
            <person name="Ibegwam C."/>
            <person name="Jalali M."/>
            <person name="Kalush F."/>
            <person name="Karpen G.H."/>
            <person name="Ke Z."/>
            <person name="Kennison J.A."/>
            <person name="Ketchum K.A."/>
            <person name="Kimmel B.E."/>
            <person name="Kodira C.D."/>
            <person name="Kraft C.L."/>
            <person name="Kravitz S."/>
            <person name="Kulp D."/>
            <person name="Lai Z."/>
            <person name="Lasko P."/>
            <person name="Lei Y."/>
            <person name="Levitsky A.A."/>
            <person name="Li J.H."/>
            <person name="Li Z."/>
            <person name="Liang Y."/>
            <person name="Lin X."/>
            <person name="Liu X."/>
            <person name="Mattei B."/>
            <person name="McIntosh T.C."/>
            <person name="McLeod M.P."/>
            <person name="McPherson D."/>
            <person name="Merkulov G."/>
            <person name="Milshina N.V."/>
            <person name="Mobarry C."/>
            <person name="Morris J."/>
            <person name="Moshrefi A."/>
            <person name="Mount S.M."/>
            <person name="Moy M."/>
            <person name="Murphy B."/>
            <person name="Murphy L."/>
            <person name="Muzny D.M."/>
            <person name="Nelson D.L."/>
            <person name="Nelson D.R."/>
            <person name="Nelson K.A."/>
            <person name="Nixon K."/>
            <person name="Nusskern D.R."/>
            <person name="Pacleb J.M."/>
            <person name="Palazzolo M."/>
            <person name="Pittman G.S."/>
            <person name="Pan S."/>
            <person name="Pollard J."/>
            <person name="Puri V."/>
            <person name="Reese M.G."/>
            <person name="Reinert K."/>
            <person name="Remington K."/>
            <person name="Saunders R.D.C."/>
            <person name="Scheeler F."/>
            <person name="Shen H."/>
            <person name="Shue B.C."/>
            <person name="Siden-Kiamos I."/>
            <person name="Simpson M."/>
            <person name="Skupski M.P."/>
            <person name="Smith T.J."/>
            <person name="Spier E."/>
            <person name="Spradling A.C."/>
            <person name="Stapleton M."/>
            <person name="Strong R."/>
            <person name="Sun E."/>
            <person name="Svirskas R."/>
            <person name="Tector C."/>
            <person name="Turner R."/>
            <person name="Venter E."/>
            <person name="Wang A.H."/>
            <person name="Wang X."/>
            <person name="Wang Z.-Y."/>
            <person name="Wassarman D.A."/>
            <person name="Weinstock G.M."/>
            <person name="Weissenbach J."/>
            <person name="Williams S.M."/>
            <person name="Woodage T."/>
            <person name="Worley K.C."/>
            <person name="Wu D."/>
            <person name="Yang S."/>
            <person name="Yao Q.A."/>
            <person name="Ye J."/>
            <person name="Yeh R.-F."/>
            <person name="Zaveri J.S."/>
            <person name="Zhan M."/>
            <person name="Zhang G."/>
            <person name="Zhao Q."/>
            <person name="Zheng L."/>
            <person name="Zheng X.H."/>
            <person name="Zhong F.N."/>
            <person name="Zhong W."/>
            <person name="Zhou X."/>
            <person name="Zhu S.C."/>
            <person name="Zhu X."/>
            <person name="Smith H.O."/>
            <person name="Gibbs R.A."/>
            <person name="Myers E.W."/>
            <person name="Rubin G.M."/>
            <person name="Venter J.C."/>
        </authorList>
    </citation>
    <scope>NUCLEOTIDE SEQUENCE [LARGE SCALE GENOMIC DNA]</scope>
    <source>
        <strain>Berkeley</strain>
    </source>
</reference>
<reference key="2">
    <citation type="journal article" date="2002" name="Genome Biol.">
        <title>Annotation of the Drosophila melanogaster euchromatic genome: a systematic review.</title>
        <authorList>
            <person name="Misra S."/>
            <person name="Crosby M.A."/>
            <person name="Mungall C.J."/>
            <person name="Matthews B.B."/>
            <person name="Campbell K.S."/>
            <person name="Hradecky P."/>
            <person name="Huang Y."/>
            <person name="Kaminker J.S."/>
            <person name="Millburn G.H."/>
            <person name="Prochnik S.E."/>
            <person name="Smith C.D."/>
            <person name="Tupy J.L."/>
            <person name="Whitfield E.J."/>
            <person name="Bayraktaroglu L."/>
            <person name="Berman B.P."/>
            <person name="Bettencourt B.R."/>
            <person name="Celniker S.E."/>
            <person name="de Grey A.D.N.J."/>
            <person name="Drysdale R.A."/>
            <person name="Harris N.L."/>
            <person name="Richter J."/>
            <person name="Russo S."/>
            <person name="Schroeder A.J."/>
            <person name="Shu S.Q."/>
            <person name="Stapleton M."/>
            <person name="Yamada C."/>
            <person name="Ashburner M."/>
            <person name="Gelbart W.M."/>
            <person name="Rubin G.M."/>
            <person name="Lewis S.E."/>
        </authorList>
    </citation>
    <scope>GENOME REANNOTATION</scope>
    <source>
        <strain>Berkeley</strain>
    </source>
</reference>
<reference key="3">
    <citation type="journal article" date="2017" name="J. Cell Biol.">
        <title>Outer nuclear membrane protein Kuduk modulates the LINC complex and nuclear envelope architecture.</title>
        <authorList>
            <person name="Ding Z.Y."/>
            <person name="Wang Y.H."/>
            <person name="Huang Y.C."/>
            <person name="Lee M.C."/>
            <person name="Tseng M.J."/>
            <person name="Chi Y.H."/>
            <person name="Huang M.L."/>
        </authorList>
    </citation>
    <scope>DISRUPTION PHENOTYPE</scope>
    <scope>SUBCELLULAR LOCATION</scope>
    <scope>TOPOLOGY</scope>
    <scope>FUNCTION</scope>
    <scope>INTERACTION WITH KLAR AND MSP300</scope>
    <scope>SUBUNIT</scope>
</reference>